<keyword id="KW-0067">ATP-binding</keyword>
<keyword id="KW-0418">Kinase</keyword>
<keyword id="KW-0441">Lipid A biosynthesis</keyword>
<keyword id="KW-0444">Lipid biosynthesis</keyword>
<keyword id="KW-0443">Lipid metabolism</keyword>
<keyword id="KW-0547">Nucleotide-binding</keyword>
<keyword id="KW-1185">Reference proteome</keyword>
<keyword id="KW-0808">Transferase</keyword>
<evidence type="ECO:0000255" key="1">
    <source>
        <dbReference type="HAMAP-Rule" id="MF_00409"/>
    </source>
</evidence>
<reference key="1">
    <citation type="submission" date="2006-12" db="EMBL/GenBank/DDBJ databases">
        <title>Complete sequence of chromosome 1 of Paracoccus denitrificans PD1222.</title>
        <authorList>
            <person name="Copeland A."/>
            <person name="Lucas S."/>
            <person name="Lapidus A."/>
            <person name="Barry K."/>
            <person name="Detter J.C."/>
            <person name="Glavina del Rio T."/>
            <person name="Hammon N."/>
            <person name="Israni S."/>
            <person name="Dalin E."/>
            <person name="Tice H."/>
            <person name="Pitluck S."/>
            <person name="Munk A.C."/>
            <person name="Brettin T."/>
            <person name="Bruce D."/>
            <person name="Han C."/>
            <person name="Tapia R."/>
            <person name="Gilna P."/>
            <person name="Schmutz J."/>
            <person name="Larimer F."/>
            <person name="Land M."/>
            <person name="Hauser L."/>
            <person name="Kyrpides N."/>
            <person name="Lykidis A."/>
            <person name="Spiro S."/>
            <person name="Richardson D.J."/>
            <person name="Moir J.W.B."/>
            <person name="Ferguson S.J."/>
            <person name="van Spanning R.J.M."/>
            <person name="Richardson P."/>
        </authorList>
    </citation>
    <scope>NUCLEOTIDE SEQUENCE [LARGE SCALE GENOMIC DNA]</scope>
    <source>
        <strain>Pd 1222</strain>
    </source>
</reference>
<organism>
    <name type="scientific">Paracoccus denitrificans (strain Pd 1222)</name>
    <dbReference type="NCBI Taxonomy" id="318586"/>
    <lineage>
        <taxon>Bacteria</taxon>
        <taxon>Pseudomonadati</taxon>
        <taxon>Pseudomonadota</taxon>
        <taxon>Alphaproteobacteria</taxon>
        <taxon>Rhodobacterales</taxon>
        <taxon>Paracoccaceae</taxon>
        <taxon>Paracoccus</taxon>
    </lineage>
</organism>
<feature type="chain" id="PRO_0000291220" description="Tetraacyldisaccharide 4'-kinase">
    <location>
        <begin position="1"/>
        <end position="329"/>
    </location>
</feature>
<feature type="binding site" evidence="1">
    <location>
        <begin position="54"/>
        <end position="61"/>
    </location>
    <ligand>
        <name>ATP</name>
        <dbReference type="ChEBI" id="CHEBI:30616"/>
    </ligand>
</feature>
<proteinExistence type="inferred from homology"/>
<accession>A1B3U2</accession>
<gene>
    <name evidence="1" type="primary">lpxK</name>
    <name type="ordered locus">Pden_2094</name>
</gene>
<name>LPXK_PARDP</name>
<comment type="function">
    <text evidence="1">Transfers the gamma-phosphate of ATP to the 4'-position of a tetraacyldisaccharide 1-phosphate intermediate (termed DS-1-P) to form tetraacyldisaccharide 1,4'-bis-phosphate (lipid IVA).</text>
</comment>
<comment type="catalytic activity">
    <reaction evidence="1">
        <text>a lipid A disaccharide + ATP = a lipid IVA + ADP + H(+)</text>
        <dbReference type="Rhea" id="RHEA:67840"/>
        <dbReference type="ChEBI" id="CHEBI:15378"/>
        <dbReference type="ChEBI" id="CHEBI:30616"/>
        <dbReference type="ChEBI" id="CHEBI:176343"/>
        <dbReference type="ChEBI" id="CHEBI:176425"/>
        <dbReference type="ChEBI" id="CHEBI:456216"/>
        <dbReference type="EC" id="2.7.1.130"/>
    </reaction>
</comment>
<comment type="pathway">
    <text evidence="1">Glycolipid biosynthesis; lipid IV(A) biosynthesis; lipid IV(A) from (3R)-3-hydroxytetradecanoyl-[acyl-carrier-protein] and UDP-N-acetyl-alpha-D-glucosamine: step 6/6.</text>
</comment>
<comment type="similarity">
    <text evidence="1">Belongs to the LpxK family.</text>
</comment>
<sequence>MSRRAPDFWFQPPGLRARLLAPLGALYAAATARRLARGPRTRPGVPVICIGNLNAGGTGKTPTTIMLARLLQDRGVAVHIVSRGYGGSEKGPRRVEEARHSAAEVGDEPLLMAAFAPVWVADDRLAGARAAVEAGAQAILLDDGFQDPALAHDLSLVVVDAAKGFGNGLCLPAGPLREPVDRGLARAGLLLSIGEAAAQARFAATLGTRLPLPHLTGRLAPLQTGMDWQGQRVLAFAGIGHPEKFFATLRGLGADVVRAEALEDHQPFTPQLLIRLETESRLTGAQMVTTEKDAVRLPRSFRPKVLALPVRLQLDDAAPLEERLASLGL</sequence>
<dbReference type="EC" id="2.7.1.130" evidence="1"/>
<dbReference type="EMBL" id="CP000489">
    <property type="protein sequence ID" value="ABL70186.1"/>
    <property type="molecule type" value="Genomic_DNA"/>
</dbReference>
<dbReference type="RefSeq" id="WP_011748381.1">
    <property type="nucleotide sequence ID" value="NC_008686.1"/>
</dbReference>
<dbReference type="SMR" id="A1B3U2"/>
<dbReference type="STRING" id="318586.Pden_2094"/>
<dbReference type="EnsemblBacteria" id="ABL70186">
    <property type="protein sequence ID" value="ABL70186"/>
    <property type="gene ID" value="Pden_2094"/>
</dbReference>
<dbReference type="GeneID" id="93450491"/>
<dbReference type="KEGG" id="pde:Pden_2094"/>
<dbReference type="eggNOG" id="COG1663">
    <property type="taxonomic scope" value="Bacteria"/>
</dbReference>
<dbReference type="HOGENOM" id="CLU_038816_0_0_5"/>
<dbReference type="OrthoDB" id="9766423at2"/>
<dbReference type="UniPathway" id="UPA00359">
    <property type="reaction ID" value="UER00482"/>
</dbReference>
<dbReference type="Proteomes" id="UP000000361">
    <property type="component" value="Chromosome 1"/>
</dbReference>
<dbReference type="GO" id="GO:0005886">
    <property type="term" value="C:plasma membrane"/>
    <property type="evidence" value="ECO:0007669"/>
    <property type="project" value="TreeGrafter"/>
</dbReference>
<dbReference type="GO" id="GO:0005524">
    <property type="term" value="F:ATP binding"/>
    <property type="evidence" value="ECO:0007669"/>
    <property type="project" value="UniProtKB-UniRule"/>
</dbReference>
<dbReference type="GO" id="GO:0009029">
    <property type="term" value="F:tetraacyldisaccharide 4'-kinase activity"/>
    <property type="evidence" value="ECO:0007669"/>
    <property type="project" value="UniProtKB-UniRule"/>
</dbReference>
<dbReference type="GO" id="GO:0009245">
    <property type="term" value="P:lipid A biosynthetic process"/>
    <property type="evidence" value="ECO:0007669"/>
    <property type="project" value="UniProtKB-UniRule"/>
</dbReference>
<dbReference type="GO" id="GO:0009244">
    <property type="term" value="P:lipopolysaccharide core region biosynthetic process"/>
    <property type="evidence" value="ECO:0007669"/>
    <property type="project" value="TreeGrafter"/>
</dbReference>
<dbReference type="HAMAP" id="MF_00409">
    <property type="entry name" value="LpxK"/>
    <property type="match status" value="1"/>
</dbReference>
<dbReference type="InterPro" id="IPR003758">
    <property type="entry name" value="LpxK"/>
</dbReference>
<dbReference type="InterPro" id="IPR027417">
    <property type="entry name" value="P-loop_NTPase"/>
</dbReference>
<dbReference type="NCBIfam" id="TIGR00682">
    <property type="entry name" value="lpxK"/>
    <property type="match status" value="1"/>
</dbReference>
<dbReference type="PANTHER" id="PTHR42724">
    <property type="entry name" value="TETRAACYLDISACCHARIDE 4'-KINASE"/>
    <property type="match status" value="1"/>
</dbReference>
<dbReference type="PANTHER" id="PTHR42724:SF1">
    <property type="entry name" value="TETRAACYLDISACCHARIDE 4'-KINASE, MITOCHONDRIAL-RELATED"/>
    <property type="match status" value="1"/>
</dbReference>
<dbReference type="Pfam" id="PF02606">
    <property type="entry name" value="LpxK"/>
    <property type="match status" value="1"/>
</dbReference>
<dbReference type="SUPFAM" id="SSF52540">
    <property type="entry name" value="P-loop containing nucleoside triphosphate hydrolases"/>
    <property type="match status" value="1"/>
</dbReference>
<protein>
    <recommendedName>
        <fullName evidence="1">Tetraacyldisaccharide 4'-kinase</fullName>
        <ecNumber evidence="1">2.7.1.130</ecNumber>
    </recommendedName>
    <alternativeName>
        <fullName evidence="1">Lipid A 4'-kinase</fullName>
    </alternativeName>
</protein>